<evidence type="ECO:0000250" key="1"/>
<evidence type="ECO:0000255" key="2">
    <source>
        <dbReference type="PROSITE-ProRule" id="PRU00251"/>
    </source>
</evidence>
<evidence type="ECO:0000256" key="3">
    <source>
        <dbReference type="SAM" id="MobiDB-lite"/>
    </source>
</evidence>
<evidence type="ECO:0000269" key="4">
    <source>
    </source>
</evidence>
<evidence type="ECO:0000303" key="5">
    <source>
    </source>
</evidence>
<evidence type="ECO:0000305" key="6"/>
<evidence type="ECO:0000312" key="7">
    <source>
        <dbReference type="Araport" id="AT5G26950"/>
    </source>
</evidence>
<comment type="function">
    <text evidence="1">Probable transcription factor.</text>
</comment>
<comment type="subcellular location">
    <subcellularLocation>
        <location evidence="2">Nucleus</location>
    </subcellularLocation>
</comment>
<comment type="tissue specificity">
    <text evidence="4">Expressed in pollen.</text>
</comment>
<comment type="sequence caution" evidence="6">
    <conflict type="erroneous gene model prediction">
        <sequence resource="EMBL-CDS" id="AAB61064"/>
    </conflict>
    <text>The predicted gene At5g26950 has been split into 2 genes: At5g26950 and At5g26960.</text>
</comment>
<sequence>MDSSMSTKKKTKLSVRNQTCFKKSSLSSSSTAKKTTNLSMREQTMFKKALELSTLCNIDVCVIYYGRDGKLIKTWPDDQSKVRDMAERFSRLHERERCKKRTNLSLFLRKKILDDTKLSEKVLEMEDSLESGLRVLQDKLLLLQPEKNQTEFGQTRAVSSTTNPLSPPPSLIEDHRHQQRTEPLMSGVSNTEQDLSTSSLSQNQSKFSVFLYNHDNCSFYQVPDSVSSFDSLTSTGLLGEQGSGLGSSFDLPMVFPPQMQTQTPLVPFDQFAPWNQAPSFADPMMFPYN</sequence>
<name>AGL93_ARATH</name>
<feature type="chain" id="PRO_0000274935" description="Agamous-like MADS-box protein AGL93">
    <location>
        <begin position="1"/>
        <end position="289"/>
    </location>
</feature>
<feature type="domain" description="MADS-box" evidence="2">
    <location>
        <begin position="18"/>
        <end position="78"/>
    </location>
</feature>
<feature type="region of interest" description="Disordered" evidence="3">
    <location>
        <begin position="151"/>
        <end position="197"/>
    </location>
</feature>
<feature type="compositionally biased region" description="Polar residues" evidence="3">
    <location>
        <begin position="187"/>
        <end position="197"/>
    </location>
</feature>
<accession>Q7X9H9</accession>
<accession>O04638</accession>
<reference key="1">
    <citation type="journal article" date="2003" name="Plant Cell">
        <title>Molecular and phylogenetic analyses of the complete MADS-box transcription factor family in Arabidopsis: new openings to the MADS world.</title>
        <authorList>
            <person name="Parenicova L."/>
            <person name="de Folter S."/>
            <person name="Kieffer M."/>
            <person name="Horner D.S."/>
            <person name="Favalli C."/>
            <person name="Busscher J."/>
            <person name="Cook H.E."/>
            <person name="Ingram R.M."/>
            <person name="Kater M.M."/>
            <person name="Davies B."/>
            <person name="Angenent G.C."/>
            <person name="Colombo L."/>
        </authorList>
    </citation>
    <scope>NUCLEOTIDE SEQUENCE [MRNA]</scope>
    <scope>GENE FAMILY</scope>
    <scope>NOMENCLATURE</scope>
    <source>
        <strain>cv. Columbia</strain>
        <tissue>Flower</tissue>
    </source>
</reference>
<reference key="2">
    <citation type="journal article" date="2000" name="Nature">
        <title>Sequence and analysis of chromosome 5 of the plant Arabidopsis thaliana.</title>
        <authorList>
            <person name="Tabata S."/>
            <person name="Kaneko T."/>
            <person name="Nakamura Y."/>
            <person name="Kotani H."/>
            <person name="Kato T."/>
            <person name="Asamizu E."/>
            <person name="Miyajima N."/>
            <person name="Sasamoto S."/>
            <person name="Kimura T."/>
            <person name="Hosouchi T."/>
            <person name="Kawashima K."/>
            <person name="Kohara M."/>
            <person name="Matsumoto M."/>
            <person name="Matsuno A."/>
            <person name="Muraki A."/>
            <person name="Nakayama S."/>
            <person name="Nakazaki N."/>
            <person name="Naruo K."/>
            <person name="Okumura S."/>
            <person name="Shinpo S."/>
            <person name="Takeuchi C."/>
            <person name="Wada T."/>
            <person name="Watanabe A."/>
            <person name="Yamada M."/>
            <person name="Yasuda M."/>
            <person name="Sato S."/>
            <person name="de la Bastide M."/>
            <person name="Huang E."/>
            <person name="Spiegel L."/>
            <person name="Gnoj L."/>
            <person name="O'Shaughnessy A."/>
            <person name="Preston R."/>
            <person name="Habermann K."/>
            <person name="Murray J."/>
            <person name="Johnson D."/>
            <person name="Rohlfing T."/>
            <person name="Nelson J."/>
            <person name="Stoneking T."/>
            <person name="Pepin K."/>
            <person name="Spieth J."/>
            <person name="Sekhon M."/>
            <person name="Armstrong J."/>
            <person name="Becker M."/>
            <person name="Belter E."/>
            <person name="Cordum H."/>
            <person name="Cordes M."/>
            <person name="Courtney L."/>
            <person name="Courtney W."/>
            <person name="Dante M."/>
            <person name="Du H."/>
            <person name="Edwards J."/>
            <person name="Fryman J."/>
            <person name="Haakensen B."/>
            <person name="Lamar E."/>
            <person name="Latreille P."/>
            <person name="Leonard S."/>
            <person name="Meyer R."/>
            <person name="Mulvaney E."/>
            <person name="Ozersky P."/>
            <person name="Riley A."/>
            <person name="Strowmatt C."/>
            <person name="Wagner-McPherson C."/>
            <person name="Wollam A."/>
            <person name="Yoakum M."/>
            <person name="Bell M."/>
            <person name="Dedhia N."/>
            <person name="Parnell L."/>
            <person name="Shah R."/>
            <person name="Rodriguez M."/>
            <person name="Hoon See L."/>
            <person name="Vil D."/>
            <person name="Baker J."/>
            <person name="Kirchoff K."/>
            <person name="Toth K."/>
            <person name="King L."/>
            <person name="Bahret A."/>
            <person name="Miller B."/>
            <person name="Marra M.A."/>
            <person name="Martienssen R."/>
            <person name="McCombie W.R."/>
            <person name="Wilson R.K."/>
            <person name="Murphy G."/>
            <person name="Bancroft I."/>
            <person name="Volckaert G."/>
            <person name="Wambutt R."/>
            <person name="Duesterhoeft A."/>
            <person name="Stiekema W."/>
            <person name="Pohl T."/>
            <person name="Entian K.-D."/>
            <person name="Terryn N."/>
            <person name="Hartley N."/>
            <person name="Bent E."/>
            <person name="Johnson S."/>
            <person name="Langham S.-A."/>
            <person name="McCullagh B."/>
            <person name="Robben J."/>
            <person name="Grymonprez B."/>
            <person name="Zimmermann W."/>
            <person name="Ramsperger U."/>
            <person name="Wedler H."/>
            <person name="Balke K."/>
            <person name="Wedler E."/>
            <person name="Peters S."/>
            <person name="van Staveren M."/>
            <person name="Dirkse W."/>
            <person name="Mooijman P."/>
            <person name="Klein Lankhorst R."/>
            <person name="Weitzenegger T."/>
            <person name="Bothe G."/>
            <person name="Rose M."/>
            <person name="Hauf J."/>
            <person name="Berneiser S."/>
            <person name="Hempel S."/>
            <person name="Feldpausch M."/>
            <person name="Lamberth S."/>
            <person name="Villarroel R."/>
            <person name="Gielen J."/>
            <person name="Ardiles W."/>
            <person name="Bents O."/>
            <person name="Lemcke K."/>
            <person name="Kolesov G."/>
            <person name="Mayer K.F.X."/>
            <person name="Rudd S."/>
            <person name="Schoof H."/>
            <person name="Schueller C."/>
            <person name="Zaccaria P."/>
            <person name="Mewes H.-W."/>
            <person name="Bevan M."/>
            <person name="Fransz P.F."/>
        </authorList>
    </citation>
    <scope>NUCLEOTIDE SEQUENCE [LARGE SCALE GENOMIC DNA]</scope>
    <source>
        <strain>cv. Columbia</strain>
    </source>
</reference>
<reference key="3">
    <citation type="journal article" date="2017" name="Plant J.">
        <title>Araport11: a complete reannotation of the Arabidopsis thaliana reference genome.</title>
        <authorList>
            <person name="Cheng C.Y."/>
            <person name="Krishnakumar V."/>
            <person name="Chan A.P."/>
            <person name="Thibaud-Nissen F."/>
            <person name="Schobel S."/>
            <person name="Town C.D."/>
        </authorList>
    </citation>
    <scope>GENOME REANNOTATION</scope>
    <source>
        <strain>cv. Columbia</strain>
    </source>
</reference>
<reference key="4">
    <citation type="submission" date="2006-09" db="EMBL/GenBank/DDBJ databases">
        <title>Arabidopsis ORF clones.</title>
        <authorList>
            <person name="Bautista V.R."/>
            <person name="Kim C.J."/>
            <person name="Chen H."/>
            <person name="Quinitio C."/>
            <person name="Ecker J.R."/>
        </authorList>
    </citation>
    <scope>NUCLEOTIDE SEQUENCE [LARGE SCALE MRNA]</scope>
    <source>
        <strain>cv. Columbia</strain>
    </source>
</reference>
<reference key="5">
    <citation type="journal article" date="2003" name="Mol. Biol. Evol.">
        <title>Evolution and divergence of the MADS-box gene family based on genome-wide expression analyses.</title>
        <authorList>
            <person name="Kofuji R."/>
            <person name="Sumikawa N."/>
            <person name="Yamasaki M."/>
            <person name="Kondo K."/>
            <person name="Ueda K."/>
            <person name="Ito M."/>
            <person name="Hasebe M."/>
        </authorList>
    </citation>
    <scope>TISSUE SPECIFICITY</scope>
</reference>
<gene>
    <name evidence="5" type="primary">AGL93</name>
    <name evidence="7" type="ordered locus">At5g26950</name>
    <name type="ORF">F2P16.17</name>
</gene>
<keyword id="KW-0238">DNA-binding</keyword>
<keyword id="KW-0539">Nucleus</keyword>
<keyword id="KW-1185">Reference proteome</keyword>
<keyword id="KW-0804">Transcription</keyword>
<keyword id="KW-0805">Transcription regulation</keyword>
<proteinExistence type="evidence at transcript level"/>
<dbReference type="EMBL" id="AY141228">
    <property type="protein sequence ID" value="AAN52792.1"/>
    <property type="molecule type" value="mRNA"/>
</dbReference>
<dbReference type="EMBL" id="AF007270">
    <property type="protein sequence ID" value="AAB61064.1"/>
    <property type="status" value="ALT_SEQ"/>
    <property type="molecule type" value="Genomic_DNA"/>
</dbReference>
<dbReference type="EMBL" id="CP002688">
    <property type="protein sequence ID" value="AED93633.1"/>
    <property type="molecule type" value="Genomic_DNA"/>
</dbReference>
<dbReference type="EMBL" id="BT028900">
    <property type="protein sequence ID" value="ABI49447.1"/>
    <property type="molecule type" value="mRNA"/>
</dbReference>
<dbReference type="RefSeq" id="NP_198047.1">
    <property type="nucleotide sequence ID" value="NM_122577.2"/>
</dbReference>
<dbReference type="SMR" id="Q7X9H9"/>
<dbReference type="BioGRID" id="18028">
    <property type="interactions" value="3"/>
</dbReference>
<dbReference type="FunCoup" id="Q7X9H9">
    <property type="interactions" value="26"/>
</dbReference>
<dbReference type="IntAct" id="Q7X9H9">
    <property type="interactions" value="4"/>
</dbReference>
<dbReference type="STRING" id="3702.Q7X9H9"/>
<dbReference type="PaxDb" id="3702-AT5G26950.1"/>
<dbReference type="ProteomicsDB" id="244717"/>
<dbReference type="EnsemblPlants" id="AT5G26950.1">
    <property type="protein sequence ID" value="AT5G26950.1"/>
    <property type="gene ID" value="AT5G26950"/>
</dbReference>
<dbReference type="GeneID" id="832753"/>
<dbReference type="Gramene" id="AT5G26950.1">
    <property type="protein sequence ID" value="AT5G26950.1"/>
    <property type="gene ID" value="AT5G26950"/>
</dbReference>
<dbReference type="KEGG" id="ath:AT5G26950"/>
<dbReference type="Araport" id="AT5G26950"/>
<dbReference type="TAIR" id="AT5G26950">
    <property type="gene designation" value="AGL93"/>
</dbReference>
<dbReference type="eggNOG" id="KOG0014">
    <property type="taxonomic scope" value="Eukaryota"/>
</dbReference>
<dbReference type="HOGENOM" id="CLU_089453_0_0_1"/>
<dbReference type="InParanoid" id="Q7X9H9"/>
<dbReference type="OMA" id="CPQVINN"/>
<dbReference type="PhylomeDB" id="Q7X9H9"/>
<dbReference type="PRO" id="PR:Q7X9H9"/>
<dbReference type="Proteomes" id="UP000006548">
    <property type="component" value="Chromosome 5"/>
</dbReference>
<dbReference type="ExpressionAtlas" id="Q7X9H9">
    <property type="expression patterns" value="baseline and differential"/>
</dbReference>
<dbReference type="GO" id="GO:0005634">
    <property type="term" value="C:nucleus"/>
    <property type="evidence" value="ECO:0007669"/>
    <property type="project" value="UniProtKB-SubCell"/>
</dbReference>
<dbReference type="GO" id="GO:0000987">
    <property type="term" value="F:cis-regulatory region sequence-specific DNA binding"/>
    <property type="evidence" value="ECO:0007669"/>
    <property type="project" value="InterPro"/>
</dbReference>
<dbReference type="GO" id="GO:0003700">
    <property type="term" value="F:DNA-binding transcription factor activity"/>
    <property type="evidence" value="ECO:0000250"/>
    <property type="project" value="TAIR"/>
</dbReference>
<dbReference type="GO" id="GO:0000981">
    <property type="term" value="F:DNA-binding transcription factor activity, RNA polymerase II-specific"/>
    <property type="evidence" value="ECO:0007669"/>
    <property type="project" value="InterPro"/>
</dbReference>
<dbReference type="GO" id="GO:0046983">
    <property type="term" value="F:protein dimerization activity"/>
    <property type="evidence" value="ECO:0007669"/>
    <property type="project" value="InterPro"/>
</dbReference>
<dbReference type="GO" id="GO:0045944">
    <property type="term" value="P:positive regulation of transcription by RNA polymerase II"/>
    <property type="evidence" value="ECO:0007669"/>
    <property type="project" value="InterPro"/>
</dbReference>
<dbReference type="CDD" id="cd00266">
    <property type="entry name" value="MADS_SRF_like"/>
    <property type="match status" value="1"/>
</dbReference>
<dbReference type="FunFam" id="3.40.1810.10:FF:000033">
    <property type="entry name" value="Agamous-like MADS-box protein AGL53"/>
    <property type="match status" value="1"/>
</dbReference>
<dbReference type="Gene3D" id="3.40.1810.10">
    <property type="entry name" value="Transcription factor, MADS-box"/>
    <property type="match status" value="1"/>
</dbReference>
<dbReference type="InterPro" id="IPR033897">
    <property type="entry name" value="SRF-like_MADS-box"/>
</dbReference>
<dbReference type="InterPro" id="IPR002100">
    <property type="entry name" value="TF_MADSbox"/>
</dbReference>
<dbReference type="InterPro" id="IPR036879">
    <property type="entry name" value="TF_MADSbox_sf"/>
</dbReference>
<dbReference type="Pfam" id="PF00319">
    <property type="entry name" value="SRF-TF"/>
    <property type="match status" value="1"/>
</dbReference>
<dbReference type="SMART" id="SM00432">
    <property type="entry name" value="MADS"/>
    <property type="match status" value="1"/>
</dbReference>
<dbReference type="SUPFAM" id="SSF55455">
    <property type="entry name" value="SRF-like"/>
    <property type="match status" value="1"/>
</dbReference>
<dbReference type="PROSITE" id="PS50066">
    <property type="entry name" value="MADS_BOX_2"/>
    <property type="match status" value="1"/>
</dbReference>
<protein>
    <recommendedName>
        <fullName evidence="6">Agamous-like MADS-box protein AGL93</fullName>
    </recommendedName>
</protein>
<organism>
    <name type="scientific">Arabidopsis thaliana</name>
    <name type="common">Mouse-ear cress</name>
    <dbReference type="NCBI Taxonomy" id="3702"/>
    <lineage>
        <taxon>Eukaryota</taxon>
        <taxon>Viridiplantae</taxon>
        <taxon>Streptophyta</taxon>
        <taxon>Embryophyta</taxon>
        <taxon>Tracheophyta</taxon>
        <taxon>Spermatophyta</taxon>
        <taxon>Magnoliopsida</taxon>
        <taxon>eudicotyledons</taxon>
        <taxon>Gunneridae</taxon>
        <taxon>Pentapetalae</taxon>
        <taxon>rosids</taxon>
        <taxon>malvids</taxon>
        <taxon>Brassicales</taxon>
        <taxon>Brassicaceae</taxon>
        <taxon>Camelineae</taxon>
        <taxon>Arabidopsis</taxon>
    </lineage>
</organism>